<reference key="1">
    <citation type="journal article" date="1990" name="J. Gen. Microbiol.">
        <title>Nucleotide sequence of the dextran glucosidase (dexB) gene of Streptococcus mutans.</title>
        <authorList>
            <person name="Russell R.R.B."/>
            <person name="Ferretti J.J."/>
        </authorList>
    </citation>
    <scope>NUCLEOTIDE SEQUENCE [GENOMIC DNA]</scope>
    <source>
        <strain>Ingbritt</strain>
    </source>
</reference>
<reference key="2">
    <citation type="journal article" date="2002" name="Proc. Natl. Acad. Sci. U.S.A.">
        <title>Genome sequence of Streptococcus mutans UA159, a cariogenic dental pathogen.</title>
        <authorList>
            <person name="Ajdic D.J."/>
            <person name="McShan W.M."/>
            <person name="McLaughlin R.E."/>
            <person name="Savic G."/>
            <person name="Chang J."/>
            <person name="Carson M.B."/>
            <person name="Primeaux C."/>
            <person name="Tian R."/>
            <person name="Kenton S."/>
            <person name="Jia H.G."/>
            <person name="Lin S.P."/>
            <person name="Qian Y."/>
            <person name="Li S."/>
            <person name="Zhu H."/>
            <person name="Najar F.Z."/>
            <person name="Lai H."/>
            <person name="White J."/>
            <person name="Roe B.A."/>
            <person name="Ferretti J.J."/>
        </authorList>
    </citation>
    <scope>NUCLEOTIDE SEQUENCE [LARGE SCALE GENOMIC DNA]</scope>
    <source>
        <strain>ATCC 700610 / UA159</strain>
    </source>
</reference>
<sequence>MQKHWWHKATVYQIYPKSFMDTNGDGIGDLKGITSKLDYLQKLGVMAIWLSPVYDSPMDDNGYDIANYEAITDIFGNMADMDNLLTQAKMRGIKIIMDLVVNHTSDEHAWFIEAREHPDSSERDYYIWCDQPNDLESIFGGSAWQYDDKSDQYYLHFFSKKQPDLNWENANLRQKIYDMMNFWIDKGIGGFRMDVIDMIGKIPAQHIVSNGPKLHAYLKEMNAASFGQHDLLTVGETWGATPEIAKQYSNPVNHELSMVFQFEHIGLQHKPEAPKWDYVKELNVPALKTIFNKWQTELELGQGWNSLFWNNHDLPRVLSIWGNTGKYREKSAKALAILLHLMRGTPYIYQGEEIGMTNYPFKDLNELDDIESLNYAKEAFTNGKSMETIMDSIRMIGRDNARTPMQWDASQNAGFSTADKTWLPVNPNYKDINVQAALKNSNSIFYTYQQLIQLRKENDWLVDADFELLPTADKVFAYLRKVREERYLIVVNVSDQEEVLEIDVDKQETLISNTNESAALANHKLQPWDAFCIKIN</sequence>
<comment type="function">
    <text>The physiological substrates may be short isomaltosaccharides.</text>
</comment>
<comment type="catalytic activity">
    <reaction>
        <text>Hydrolysis of (1-&gt;6)-alpha-D-glucosidic linkages in (1-&gt;6)-alpha-D-glucans and derived oligosaccharides.</text>
        <dbReference type="EC" id="3.2.1.70"/>
    </reaction>
</comment>
<comment type="subcellular location">
    <subcellularLocation>
        <location>Cytoplasm</location>
    </subcellularLocation>
</comment>
<comment type="similarity">
    <text evidence="2">Belongs to the glycosyl hydrolase 13 family.</text>
</comment>
<name>DEXB_STRMU</name>
<keyword id="KW-0002">3D-structure</keyword>
<keyword id="KW-0963">Cytoplasm</keyword>
<keyword id="KW-0326">Glycosidase</keyword>
<keyword id="KW-0378">Hydrolase</keyword>
<keyword id="KW-1185">Reference proteome</keyword>
<accession>Q99040</accession>
<protein>
    <recommendedName>
        <fullName>Glucan 1,6-alpha-glucosidase</fullName>
        <ecNumber>3.2.1.70</ecNumber>
    </recommendedName>
    <alternativeName>
        <fullName>Dextran glucosidase</fullName>
    </alternativeName>
    <alternativeName>
        <fullName>Exo-1,6-alpha-glucosidase</fullName>
    </alternativeName>
    <alternativeName>
        <fullName>Glucodextranase</fullName>
    </alternativeName>
</protein>
<gene>
    <name type="primary">dexB</name>
    <name type="ordered locus">SMU_883</name>
</gene>
<feature type="chain" id="PRO_0000054339" description="Glucan 1,6-alpha-glucosidase">
    <location>
        <begin position="1"/>
        <end position="536"/>
    </location>
</feature>
<feature type="active site" description="Nucleophile" evidence="1">
    <location>
        <position position="194"/>
    </location>
</feature>
<feature type="active site" description="Proton donor" evidence="1">
    <location>
        <position position="236"/>
    </location>
</feature>
<feature type="site" description="Transition state stabilizer" evidence="1">
    <location>
        <position position="313"/>
    </location>
</feature>
<feature type="sequence conflict" description="In Ref. 1; AAA26939." evidence="2" ref="1">
    <original>T</original>
    <variation>A</variation>
    <location>
        <position position="72"/>
    </location>
</feature>
<feature type="sequence conflict" description="In Ref. 1; AAA26939." evidence="2" ref="1">
    <original>G</original>
    <variation>D</variation>
    <location>
        <position position="92"/>
    </location>
</feature>
<feature type="sequence conflict" description="In Ref. 1; AAA26939." evidence="2" ref="1">
    <original>A</original>
    <variation>T</variation>
    <location>
        <position position="109"/>
    </location>
</feature>
<feature type="sequence conflict" description="In Ref. 1; AAA26939." evidence="2" ref="1">
    <original>V</original>
    <variation>I</variation>
    <location>
        <position position="259"/>
    </location>
</feature>
<feature type="helix" evidence="5">
    <location>
        <begin position="5"/>
        <end position="7"/>
    </location>
</feature>
<feature type="strand" evidence="5">
    <location>
        <begin position="11"/>
        <end position="14"/>
    </location>
</feature>
<feature type="helix" evidence="5">
    <location>
        <begin position="16"/>
        <end position="18"/>
    </location>
</feature>
<feature type="strand" evidence="5">
    <location>
        <begin position="22"/>
        <end position="27"/>
    </location>
</feature>
<feature type="helix" evidence="5">
    <location>
        <begin position="30"/>
        <end position="43"/>
    </location>
</feature>
<feature type="strand" evidence="5">
    <location>
        <begin position="46"/>
        <end position="50"/>
    </location>
</feature>
<feature type="turn" evidence="5">
    <location>
        <begin position="59"/>
        <end position="62"/>
    </location>
</feature>
<feature type="strand" evidence="5">
    <location>
        <begin position="66"/>
        <end position="71"/>
    </location>
</feature>
<feature type="turn" evidence="5">
    <location>
        <begin position="73"/>
        <end position="75"/>
    </location>
</feature>
<feature type="helix" evidence="5">
    <location>
        <begin position="78"/>
        <end position="90"/>
    </location>
</feature>
<feature type="strand" evidence="5">
    <location>
        <begin position="94"/>
        <end position="99"/>
    </location>
</feature>
<feature type="helix" evidence="5">
    <location>
        <begin position="109"/>
        <end position="116"/>
    </location>
</feature>
<feature type="helix" evidence="5">
    <location>
        <begin position="121"/>
        <end position="125"/>
    </location>
</feature>
<feature type="strand" evidence="5">
    <location>
        <begin position="128"/>
        <end position="131"/>
    </location>
</feature>
<feature type="strand" evidence="5">
    <location>
        <begin position="140"/>
        <end position="147"/>
    </location>
</feature>
<feature type="turn" evidence="5">
    <location>
        <begin position="148"/>
        <end position="151"/>
    </location>
</feature>
<feature type="strand" evidence="5">
    <location>
        <begin position="152"/>
        <end position="155"/>
    </location>
</feature>
<feature type="helix" evidence="5">
    <location>
        <begin position="170"/>
        <end position="185"/>
    </location>
</feature>
<feature type="strand" evidence="5">
    <location>
        <begin position="190"/>
        <end position="193"/>
    </location>
</feature>
<feature type="helix" evidence="5">
    <location>
        <begin position="196"/>
        <end position="198"/>
    </location>
</feature>
<feature type="helix" evidence="5">
    <location>
        <begin position="203"/>
        <end position="205"/>
    </location>
</feature>
<feature type="helix" evidence="5">
    <location>
        <begin position="214"/>
        <end position="224"/>
    </location>
</feature>
<feature type="turn" evidence="5">
    <location>
        <begin position="225"/>
        <end position="230"/>
    </location>
</feature>
<feature type="strand" evidence="5">
    <location>
        <begin position="232"/>
        <end position="236"/>
    </location>
</feature>
<feature type="helix" evidence="5">
    <location>
        <begin position="242"/>
        <end position="249"/>
    </location>
</feature>
<feature type="helix" evidence="5">
    <location>
        <begin position="251"/>
        <end position="253"/>
    </location>
</feature>
<feature type="strand" evidence="5">
    <location>
        <begin position="257"/>
        <end position="260"/>
    </location>
</feature>
<feature type="helix" evidence="5">
    <location>
        <begin position="265"/>
        <end position="268"/>
    </location>
</feature>
<feature type="helix" evidence="5">
    <location>
        <begin position="284"/>
        <end position="297"/>
    </location>
</feature>
<feature type="turn" evidence="5">
    <location>
        <begin position="300"/>
        <end position="302"/>
    </location>
</feature>
<feature type="strand" evidence="5">
    <location>
        <begin position="305"/>
        <end position="309"/>
    </location>
</feature>
<feature type="helix" evidence="5">
    <location>
        <begin position="317"/>
        <end position="320"/>
    </location>
</feature>
<feature type="helix" evidence="5">
    <location>
        <begin position="328"/>
        <end position="340"/>
    </location>
</feature>
<feature type="strand" evidence="5">
    <location>
        <begin position="342"/>
        <end position="349"/>
    </location>
</feature>
<feature type="helix" evidence="5">
    <location>
        <begin position="352"/>
        <end position="354"/>
    </location>
</feature>
<feature type="helix" evidence="5">
    <location>
        <begin position="364"/>
        <end position="366"/>
    </location>
</feature>
<feature type="helix" evidence="5">
    <location>
        <begin position="370"/>
        <end position="380"/>
    </location>
</feature>
<feature type="turn" evidence="5">
    <location>
        <begin position="381"/>
        <end position="383"/>
    </location>
</feature>
<feature type="helix" evidence="5">
    <location>
        <begin position="386"/>
        <end position="396"/>
    </location>
</feature>
<feature type="helix" evidence="5">
    <location>
        <begin position="398"/>
        <end position="401"/>
    </location>
</feature>
<feature type="strand" evidence="5">
    <location>
        <begin position="408"/>
        <end position="410"/>
    </location>
</feature>
<feature type="helix" evidence="5">
    <location>
        <begin position="411"/>
        <end position="414"/>
    </location>
</feature>
<feature type="strand" evidence="5">
    <location>
        <begin position="417"/>
        <end position="420"/>
    </location>
</feature>
<feature type="helix" evidence="5">
    <location>
        <begin position="427"/>
        <end position="430"/>
    </location>
</feature>
<feature type="helix" evidence="5">
    <location>
        <begin position="434"/>
        <end position="439"/>
    </location>
</feature>
<feature type="helix" evidence="5">
    <location>
        <begin position="444"/>
        <end position="457"/>
    </location>
</feature>
<feature type="helix" evidence="5">
    <location>
        <begin position="460"/>
        <end position="463"/>
    </location>
</feature>
<feature type="strand" evidence="3">
    <location>
        <begin position="465"/>
        <end position="468"/>
    </location>
</feature>
<feature type="strand" evidence="5">
    <location>
        <begin position="475"/>
        <end position="482"/>
    </location>
</feature>
<feature type="strand" evidence="5">
    <location>
        <begin position="485"/>
        <end position="492"/>
    </location>
</feature>
<feature type="strand" evidence="5">
    <location>
        <begin position="494"/>
        <end position="496"/>
    </location>
</feature>
<feature type="strand" evidence="5">
    <location>
        <begin position="506"/>
        <end position="514"/>
    </location>
</feature>
<feature type="helix" evidence="5">
    <location>
        <begin position="516"/>
        <end position="522"/>
    </location>
</feature>
<feature type="strand" evidence="4">
    <location>
        <begin position="523"/>
        <end position="525"/>
    </location>
</feature>
<feature type="strand" evidence="5">
    <location>
        <begin position="530"/>
        <end position="535"/>
    </location>
</feature>
<dbReference type="EC" id="3.2.1.70"/>
<dbReference type="EMBL" id="M77351">
    <property type="protein sequence ID" value="AAA26939.1"/>
    <property type="molecule type" value="Genomic_DNA"/>
</dbReference>
<dbReference type="EMBL" id="AE014133">
    <property type="protein sequence ID" value="AAN58598.1"/>
    <property type="molecule type" value="Genomic_DNA"/>
</dbReference>
<dbReference type="PIR" id="A37231">
    <property type="entry name" value="A37231"/>
</dbReference>
<dbReference type="RefSeq" id="NP_721292.1">
    <property type="nucleotide sequence ID" value="NC_004350.2"/>
</dbReference>
<dbReference type="RefSeq" id="WP_002262877.1">
    <property type="nucleotide sequence ID" value="NC_004350.2"/>
</dbReference>
<dbReference type="PDB" id="2ZIC">
    <property type="method" value="X-ray"/>
    <property type="resolution" value="2.20 A"/>
    <property type="chains" value="A=1-536"/>
</dbReference>
<dbReference type="PDB" id="2ZID">
    <property type="method" value="X-ray"/>
    <property type="resolution" value="2.20 A"/>
    <property type="chains" value="A=1-536"/>
</dbReference>
<dbReference type="PDB" id="4WLC">
    <property type="method" value="X-ray"/>
    <property type="resolution" value="2.40 A"/>
    <property type="chains" value="A=1-536"/>
</dbReference>
<dbReference type="PDB" id="4XB3">
    <property type="method" value="X-ray"/>
    <property type="resolution" value="2.09 A"/>
    <property type="chains" value="A=1-536"/>
</dbReference>
<dbReference type="PDBsum" id="2ZIC"/>
<dbReference type="PDBsum" id="2ZID"/>
<dbReference type="PDBsum" id="4WLC"/>
<dbReference type="PDBsum" id="4XB3"/>
<dbReference type="SMR" id="Q99040"/>
<dbReference type="STRING" id="210007.SMU_883"/>
<dbReference type="CAZy" id="GH13">
    <property type="family name" value="Glycoside Hydrolase Family 13"/>
</dbReference>
<dbReference type="KEGG" id="smu:SMU_883"/>
<dbReference type="PATRIC" id="fig|210007.7.peg.789"/>
<dbReference type="eggNOG" id="COG0366">
    <property type="taxonomic scope" value="Bacteria"/>
</dbReference>
<dbReference type="HOGENOM" id="CLU_006462_1_2_9"/>
<dbReference type="OrthoDB" id="9805159at2"/>
<dbReference type="PhylomeDB" id="Q99040"/>
<dbReference type="BRENDA" id="3.2.1.70">
    <property type="organism ID" value="5941"/>
</dbReference>
<dbReference type="SABIO-RK" id="Q99040"/>
<dbReference type="EvolutionaryTrace" id="Q99040"/>
<dbReference type="Proteomes" id="UP000002512">
    <property type="component" value="Chromosome"/>
</dbReference>
<dbReference type="GO" id="GO:0005737">
    <property type="term" value="C:cytoplasm"/>
    <property type="evidence" value="ECO:0007669"/>
    <property type="project" value="UniProtKB-SubCell"/>
</dbReference>
<dbReference type="GO" id="GO:0004556">
    <property type="term" value="F:alpha-amylase activity"/>
    <property type="evidence" value="ECO:0007669"/>
    <property type="project" value="TreeGrafter"/>
</dbReference>
<dbReference type="GO" id="GO:0043896">
    <property type="term" value="F:glucan 1,6-alpha-glucosidase activity"/>
    <property type="evidence" value="ECO:0007669"/>
    <property type="project" value="UniProtKB-EC"/>
</dbReference>
<dbReference type="GO" id="GO:0009313">
    <property type="term" value="P:oligosaccharide catabolic process"/>
    <property type="evidence" value="ECO:0007669"/>
    <property type="project" value="TreeGrafter"/>
</dbReference>
<dbReference type="CDD" id="cd11333">
    <property type="entry name" value="AmyAc_SI_OligoGlu_DGase"/>
    <property type="match status" value="1"/>
</dbReference>
<dbReference type="FunFam" id="3.20.20.80:FF:000064">
    <property type="entry name" value="Oligo-1,6-glucosidase"/>
    <property type="match status" value="1"/>
</dbReference>
<dbReference type="FunFam" id="3.90.400.10:FF:000002">
    <property type="entry name" value="Sucrose isomerase"/>
    <property type="match status" value="1"/>
</dbReference>
<dbReference type="Gene3D" id="3.20.20.80">
    <property type="entry name" value="Glycosidases"/>
    <property type="match status" value="1"/>
</dbReference>
<dbReference type="Gene3D" id="2.60.40.1180">
    <property type="entry name" value="Golgi alpha-mannosidase II"/>
    <property type="match status" value="1"/>
</dbReference>
<dbReference type="Gene3D" id="3.90.400.10">
    <property type="entry name" value="Oligo-1,6-glucosidase, Domain 2"/>
    <property type="match status" value="1"/>
</dbReference>
<dbReference type="InterPro" id="IPR006047">
    <property type="entry name" value="Glyco_hydro_13_cat_dom"/>
</dbReference>
<dbReference type="InterPro" id="IPR013780">
    <property type="entry name" value="Glyco_hydro_b"/>
</dbReference>
<dbReference type="InterPro" id="IPR017853">
    <property type="entry name" value="Glycoside_hydrolase_SF"/>
</dbReference>
<dbReference type="InterPro" id="IPR045857">
    <property type="entry name" value="O16G_dom_2"/>
</dbReference>
<dbReference type="NCBIfam" id="NF008183">
    <property type="entry name" value="PRK10933.1"/>
    <property type="match status" value="1"/>
</dbReference>
<dbReference type="PANTHER" id="PTHR10357">
    <property type="entry name" value="ALPHA-AMYLASE FAMILY MEMBER"/>
    <property type="match status" value="1"/>
</dbReference>
<dbReference type="PANTHER" id="PTHR10357:SF179">
    <property type="entry name" value="NEUTRAL AND BASIC AMINO ACID TRANSPORT PROTEIN RBAT"/>
    <property type="match status" value="1"/>
</dbReference>
<dbReference type="Pfam" id="PF00128">
    <property type="entry name" value="Alpha-amylase"/>
    <property type="match status" value="1"/>
</dbReference>
<dbReference type="SMART" id="SM00642">
    <property type="entry name" value="Aamy"/>
    <property type="match status" value="1"/>
</dbReference>
<dbReference type="SUPFAM" id="SSF51445">
    <property type="entry name" value="(Trans)glycosidases"/>
    <property type="match status" value="1"/>
</dbReference>
<dbReference type="SUPFAM" id="SSF51011">
    <property type="entry name" value="Glycosyl hydrolase domain"/>
    <property type="match status" value="1"/>
</dbReference>
<organism>
    <name type="scientific">Streptococcus mutans serotype c (strain ATCC 700610 / UA159)</name>
    <dbReference type="NCBI Taxonomy" id="210007"/>
    <lineage>
        <taxon>Bacteria</taxon>
        <taxon>Bacillati</taxon>
        <taxon>Bacillota</taxon>
        <taxon>Bacilli</taxon>
        <taxon>Lactobacillales</taxon>
        <taxon>Streptococcaceae</taxon>
        <taxon>Streptococcus</taxon>
    </lineage>
</organism>
<evidence type="ECO:0000250" key="1"/>
<evidence type="ECO:0000305" key="2"/>
<evidence type="ECO:0007829" key="3">
    <source>
        <dbReference type="PDB" id="2ZID"/>
    </source>
</evidence>
<evidence type="ECO:0007829" key="4">
    <source>
        <dbReference type="PDB" id="4WLC"/>
    </source>
</evidence>
<evidence type="ECO:0007829" key="5">
    <source>
        <dbReference type="PDB" id="4XB3"/>
    </source>
</evidence>
<proteinExistence type="evidence at protein level"/>